<proteinExistence type="inferred from homology"/>
<evidence type="ECO:0000250" key="1"/>
<evidence type="ECO:0000255" key="2">
    <source>
        <dbReference type="HAMAP-Rule" id="MF_00223"/>
    </source>
</evidence>
<keyword id="KW-0342">GTP-binding</keyword>
<keyword id="KW-0378">Hydrolase</keyword>
<keyword id="KW-0479">Metal-binding</keyword>
<keyword id="KW-0547">Nucleotide-binding</keyword>
<keyword id="KW-0554">One-carbon metabolism</keyword>
<keyword id="KW-1185">Reference proteome</keyword>
<keyword id="KW-0862">Zinc</keyword>
<organism>
    <name type="scientific">Latilactobacillus sakei subsp. sakei (strain 23K)</name>
    <name type="common">Lactobacillus sakei subsp. sakei</name>
    <dbReference type="NCBI Taxonomy" id="314315"/>
    <lineage>
        <taxon>Bacteria</taxon>
        <taxon>Bacillati</taxon>
        <taxon>Bacillota</taxon>
        <taxon>Bacilli</taxon>
        <taxon>Lactobacillales</taxon>
        <taxon>Lactobacillaceae</taxon>
        <taxon>Latilactobacillus</taxon>
    </lineage>
</organism>
<gene>
    <name evidence="2" type="primary">folE</name>
    <name type="ordered locus">LCA_1100</name>
</gene>
<comment type="catalytic activity">
    <reaction evidence="2">
        <text>GTP + H2O = 7,8-dihydroneopterin 3'-triphosphate + formate + H(+)</text>
        <dbReference type="Rhea" id="RHEA:17473"/>
        <dbReference type="ChEBI" id="CHEBI:15377"/>
        <dbReference type="ChEBI" id="CHEBI:15378"/>
        <dbReference type="ChEBI" id="CHEBI:15740"/>
        <dbReference type="ChEBI" id="CHEBI:37565"/>
        <dbReference type="ChEBI" id="CHEBI:58462"/>
        <dbReference type="EC" id="3.5.4.16"/>
    </reaction>
</comment>
<comment type="pathway">
    <text evidence="2">Cofactor biosynthesis; 7,8-dihydroneopterin triphosphate biosynthesis; 7,8-dihydroneopterin triphosphate from GTP: step 1/1.</text>
</comment>
<comment type="subunit">
    <text evidence="1">Toroid-shaped homodecamer, composed of two pentamers of five dimers.</text>
</comment>
<comment type="similarity">
    <text evidence="2">Belongs to the GTP cyclohydrolase I family.</text>
</comment>
<reference key="1">
    <citation type="journal article" date="2005" name="Nat. Biotechnol.">
        <title>The complete genome sequence of the meat-borne lactic acid bacterium Lactobacillus sakei 23K.</title>
        <authorList>
            <person name="Chaillou S."/>
            <person name="Champomier-Verges M.-C."/>
            <person name="Cornet M."/>
            <person name="Crutz-Le Coq A.-M."/>
            <person name="Dudez A.-M."/>
            <person name="Martin V."/>
            <person name="Beaufils S."/>
            <person name="Darbon-Rongere E."/>
            <person name="Bossy R."/>
            <person name="Loux V."/>
            <person name="Zagorec M."/>
        </authorList>
    </citation>
    <scope>NUCLEOTIDE SEQUENCE [LARGE SCALE GENOMIC DNA]</scope>
    <source>
        <strain>23K</strain>
    </source>
</reference>
<protein>
    <recommendedName>
        <fullName evidence="2">GTP cyclohydrolase 1</fullName>
        <ecNumber evidence="2">3.5.4.16</ecNumber>
    </recommendedName>
    <alternativeName>
        <fullName evidence="2">GTP cyclohydrolase I</fullName>
        <shortName evidence="2">GTP-CH-I</shortName>
    </alternativeName>
</protein>
<sequence length="189" mass="21753">MIEQANQQIEKDVRDILKQVGDDPERAGVLETPQRVAKMYGEVLAYQGETIFKDYKLFETEETDDDQMVMMQDIPFYSMCEHHMLPFFGQVSVAYLPANGQIIGLSKIPRLVDFVSKRLSVQENLTRDIGQILNQILKPYGVAVQVTARHMCVEMRGIKKANSQTHTTFYSGNFKTDRQLRSEFLQLLK</sequence>
<name>GCH1_LATSS</name>
<dbReference type="EC" id="3.5.4.16" evidence="2"/>
<dbReference type="EMBL" id="CR936503">
    <property type="protein sequence ID" value="CAI55401.1"/>
    <property type="molecule type" value="Genomic_DNA"/>
</dbReference>
<dbReference type="SMR" id="Q38WN0"/>
<dbReference type="STRING" id="314315.LCA_1100"/>
<dbReference type="KEGG" id="lsa:LCA_1100"/>
<dbReference type="eggNOG" id="COG0302">
    <property type="taxonomic scope" value="Bacteria"/>
</dbReference>
<dbReference type="HOGENOM" id="CLU_049768_3_2_9"/>
<dbReference type="OrthoDB" id="9801207at2"/>
<dbReference type="UniPathway" id="UPA00848">
    <property type="reaction ID" value="UER00151"/>
</dbReference>
<dbReference type="Proteomes" id="UP000002707">
    <property type="component" value="Chromosome"/>
</dbReference>
<dbReference type="GO" id="GO:0005737">
    <property type="term" value="C:cytoplasm"/>
    <property type="evidence" value="ECO:0007669"/>
    <property type="project" value="TreeGrafter"/>
</dbReference>
<dbReference type="GO" id="GO:0005525">
    <property type="term" value="F:GTP binding"/>
    <property type="evidence" value="ECO:0007669"/>
    <property type="project" value="UniProtKB-KW"/>
</dbReference>
<dbReference type="GO" id="GO:0003934">
    <property type="term" value="F:GTP cyclohydrolase I activity"/>
    <property type="evidence" value="ECO:0007669"/>
    <property type="project" value="UniProtKB-UniRule"/>
</dbReference>
<dbReference type="GO" id="GO:0008270">
    <property type="term" value="F:zinc ion binding"/>
    <property type="evidence" value="ECO:0007669"/>
    <property type="project" value="UniProtKB-UniRule"/>
</dbReference>
<dbReference type="GO" id="GO:0006730">
    <property type="term" value="P:one-carbon metabolic process"/>
    <property type="evidence" value="ECO:0007669"/>
    <property type="project" value="UniProtKB-UniRule"/>
</dbReference>
<dbReference type="GO" id="GO:0006729">
    <property type="term" value="P:tetrahydrobiopterin biosynthetic process"/>
    <property type="evidence" value="ECO:0007669"/>
    <property type="project" value="TreeGrafter"/>
</dbReference>
<dbReference type="GO" id="GO:0046654">
    <property type="term" value="P:tetrahydrofolate biosynthetic process"/>
    <property type="evidence" value="ECO:0007669"/>
    <property type="project" value="UniProtKB-UniRule"/>
</dbReference>
<dbReference type="FunFam" id="3.30.1130.10:FF:000001">
    <property type="entry name" value="GTP cyclohydrolase 1"/>
    <property type="match status" value="1"/>
</dbReference>
<dbReference type="Gene3D" id="1.10.286.10">
    <property type="match status" value="1"/>
</dbReference>
<dbReference type="Gene3D" id="3.30.1130.10">
    <property type="match status" value="1"/>
</dbReference>
<dbReference type="HAMAP" id="MF_00223">
    <property type="entry name" value="FolE"/>
    <property type="match status" value="1"/>
</dbReference>
<dbReference type="InterPro" id="IPR043133">
    <property type="entry name" value="GTP-CH-I_C/QueF"/>
</dbReference>
<dbReference type="InterPro" id="IPR043134">
    <property type="entry name" value="GTP-CH-I_N"/>
</dbReference>
<dbReference type="InterPro" id="IPR001474">
    <property type="entry name" value="GTP_CycHdrlase_I"/>
</dbReference>
<dbReference type="InterPro" id="IPR018234">
    <property type="entry name" value="GTP_CycHdrlase_I_CS"/>
</dbReference>
<dbReference type="InterPro" id="IPR020602">
    <property type="entry name" value="GTP_CycHdrlase_I_dom"/>
</dbReference>
<dbReference type="NCBIfam" id="TIGR00063">
    <property type="entry name" value="folE"/>
    <property type="match status" value="1"/>
</dbReference>
<dbReference type="NCBIfam" id="NF006825">
    <property type="entry name" value="PRK09347.1-2"/>
    <property type="match status" value="1"/>
</dbReference>
<dbReference type="NCBIfam" id="NF006826">
    <property type="entry name" value="PRK09347.1-3"/>
    <property type="match status" value="1"/>
</dbReference>
<dbReference type="PANTHER" id="PTHR11109:SF7">
    <property type="entry name" value="GTP CYCLOHYDROLASE 1"/>
    <property type="match status" value="1"/>
</dbReference>
<dbReference type="PANTHER" id="PTHR11109">
    <property type="entry name" value="GTP CYCLOHYDROLASE I"/>
    <property type="match status" value="1"/>
</dbReference>
<dbReference type="Pfam" id="PF01227">
    <property type="entry name" value="GTP_cyclohydroI"/>
    <property type="match status" value="1"/>
</dbReference>
<dbReference type="SUPFAM" id="SSF55620">
    <property type="entry name" value="Tetrahydrobiopterin biosynthesis enzymes-like"/>
    <property type="match status" value="1"/>
</dbReference>
<dbReference type="PROSITE" id="PS00859">
    <property type="entry name" value="GTP_CYCLOHYDROL_1_1"/>
    <property type="match status" value="1"/>
</dbReference>
<accession>Q38WN0</accession>
<feature type="chain" id="PRO_1000058674" description="GTP cyclohydrolase 1">
    <location>
        <begin position="1"/>
        <end position="189"/>
    </location>
</feature>
<feature type="binding site" evidence="2">
    <location>
        <position position="80"/>
    </location>
    <ligand>
        <name>Zn(2+)</name>
        <dbReference type="ChEBI" id="CHEBI:29105"/>
    </ligand>
</feature>
<feature type="binding site" evidence="2">
    <location>
        <position position="83"/>
    </location>
    <ligand>
        <name>Zn(2+)</name>
        <dbReference type="ChEBI" id="CHEBI:29105"/>
    </ligand>
</feature>
<feature type="binding site" evidence="2">
    <location>
        <position position="152"/>
    </location>
    <ligand>
        <name>Zn(2+)</name>
        <dbReference type="ChEBI" id="CHEBI:29105"/>
    </ligand>
</feature>